<protein>
    <recommendedName>
        <fullName evidence="1">Triosephosphate isomerase</fullName>
        <shortName evidence="1">TIM</shortName>
        <shortName evidence="1">TPI</shortName>
        <ecNumber evidence="1">5.3.1.1</ecNumber>
    </recommendedName>
    <alternativeName>
        <fullName evidence="1">Triose-phosphate isomerase</fullName>
    </alternativeName>
</protein>
<evidence type="ECO:0000255" key="1">
    <source>
        <dbReference type="HAMAP-Rule" id="MF_00147"/>
    </source>
</evidence>
<proteinExistence type="inferred from homology"/>
<comment type="function">
    <text evidence="1">Involved in the gluconeogenesis. Catalyzes stereospecifically the conversion of dihydroxyacetone phosphate (DHAP) to D-glyceraldehyde-3-phosphate (G3P).</text>
</comment>
<comment type="catalytic activity">
    <reaction evidence="1">
        <text>D-glyceraldehyde 3-phosphate = dihydroxyacetone phosphate</text>
        <dbReference type="Rhea" id="RHEA:18585"/>
        <dbReference type="ChEBI" id="CHEBI:57642"/>
        <dbReference type="ChEBI" id="CHEBI:59776"/>
        <dbReference type="EC" id="5.3.1.1"/>
    </reaction>
</comment>
<comment type="pathway">
    <text evidence="1">Carbohydrate biosynthesis; gluconeogenesis.</text>
</comment>
<comment type="pathway">
    <text evidence="1">Carbohydrate degradation; glycolysis; D-glyceraldehyde 3-phosphate from glycerone phosphate: step 1/1.</text>
</comment>
<comment type="subunit">
    <text evidence="1">Homodimer.</text>
</comment>
<comment type="subcellular location">
    <subcellularLocation>
        <location evidence="1">Cytoplasm</location>
    </subcellularLocation>
</comment>
<comment type="similarity">
    <text evidence="1">Belongs to the triosephosphate isomerase family.</text>
</comment>
<dbReference type="EC" id="5.3.1.1" evidence="1"/>
<dbReference type="EMBL" id="CP000903">
    <property type="protein sequence ID" value="ABY46077.1"/>
    <property type="molecule type" value="Genomic_DNA"/>
</dbReference>
<dbReference type="RefSeq" id="WP_002159914.1">
    <property type="nucleotide sequence ID" value="NZ_CAKMRX030000110.1"/>
</dbReference>
<dbReference type="SMR" id="A9VQ50"/>
<dbReference type="KEGG" id="bwe:BcerKBAB4_4929"/>
<dbReference type="eggNOG" id="COG0149">
    <property type="taxonomic scope" value="Bacteria"/>
</dbReference>
<dbReference type="HOGENOM" id="CLU_024251_2_3_9"/>
<dbReference type="UniPathway" id="UPA00109">
    <property type="reaction ID" value="UER00189"/>
</dbReference>
<dbReference type="UniPathway" id="UPA00138"/>
<dbReference type="Proteomes" id="UP000002154">
    <property type="component" value="Chromosome"/>
</dbReference>
<dbReference type="GO" id="GO:0005829">
    <property type="term" value="C:cytosol"/>
    <property type="evidence" value="ECO:0007669"/>
    <property type="project" value="TreeGrafter"/>
</dbReference>
<dbReference type="GO" id="GO:0004807">
    <property type="term" value="F:triose-phosphate isomerase activity"/>
    <property type="evidence" value="ECO:0007669"/>
    <property type="project" value="UniProtKB-UniRule"/>
</dbReference>
<dbReference type="GO" id="GO:0006094">
    <property type="term" value="P:gluconeogenesis"/>
    <property type="evidence" value="ECO:0007669"/>
    <property type="project" value="UniProtKB-UniRule"/>
</dbReference>
<dbReference type="GO" id="GO:0046166">
    <property type="term" value="P:glyceraldehyde-3-phosphate biosynthetic process"/>
    <property type="evidence" value="ECO:0007669"/>
    <property type="project" value="TreeGrafter"/>
</dbReference>
<dbReference type="GO" id="GO:0019563">
    <property type="term" value="P:glycerol catabolic process"/>
    <property type="evidence" value="ECO:0007669"/>
    <property type="project" value="TreeGrafter"/>
</dbReference>
<dbReference type="GO" id="GO:0006096">
    <property type="term" value="P:glycolytic process"/>
    <property type="evidence" value="ECO:0007669"/>
    <property type="project" value="UniProtKB-UniRule"/>
</dbReference>
<dbReference type="CDD" id="cd00311">
    <property type="entry name" value="TIM"/>
    <property type="match status" value="1"/>
</dbReference>
<dbReference type="FunFam" id="3.20.20.70:FF:000016">
    <property type="entry name" value="Triosephosphate isomerase"/>
    <property type="match status" value="1"/>
</dbReference>
<dbReference type="Gene3D" id="3.20.20.70">
    <property type="entry name" value="Aldolase class I"/>
    <property type="match status" value="1"/>
</dbReference>
<dbReference type="HAMAP" id="MF_00147_B">
    <property type="entry name" value="TIM_B"/>
    <property type="match status" value="1"/>
</dbReference>
<dbReference type="InterPro" id="IPR013785">
    <property type="entry name" value="Aldolase_TIM"/>
</dbReference>
<dbReference type="InterPro" id="IPR035990">
    <property type="entry name" value="TIM_sf"/>
</dbReference>
<dbReference type="InterPro" id="IPR022896">
    <property type="entry name" value="TrioseP_Isoase_bac/euk"/>
</dbReference>
<dbReference type="InterPro" id="IPR000652">
    <property type="entry name" value="Triosephosphate_isomerase"/>
</dbReference>
<dbReference type="InterPro" id="IPR020861">
    <property type="entry name" value="Triosephosphate_isomerase_AS"/>
</dbReference>
<dbReference type="NCBIfam" id="TIGR00419">
    <property type="entry name" value="tim"/>
    <property type="match status" value="1"/>
</dbReference>
<dbReference type="PANTHER" id="PTHR21139">
    <property type="entry name" value="TRIOSEPHOSPHATE ISOMERASE"/>
    <property type="match status" value="1"/>
</dbReference>
<dbReference type="PANTHER" id="PTHR21139:SF42">
    <property type="entry name" value="TRIOSEPHOSPHATE ISOMERASE"/>
    <property type="match status" value="1"/>
</dbReference>
<dbReference type="Pfam" id="PF00121">
    <property type="entry name" value="TIM"/>
    <property type="match status" value="1"/>
</dbReference>
<dbReference type="SUPFAM" id="SSF51351">
    <property type="entry name" value="Triosephosphate isomerase (TIM)"/>
    <property type="match status" value="1"/>
</dbReference>
<dbReference type="PROSITE" id="PS00171">
    <property type="entry name" value="TIM_1"/>
    <property type="match status" value="1"/>
</dbReference>
<dbReference type="PROSITE" id="PS51440">
    <property type="entry name" value="TIM_2"/>
    <property type="match status" value="1"/>
</dbReference>
<organism>
    <name type="scientific">Bacillus mycoides (strain KBAB4)</name>
    <name type="common">Bacillus weihenstephanensis</name>
    <dbReference type="NCBI Taxonomy" id="315730"/>
    <lineage>
        <taxon>Bacteria</taxon>
        <taxon>Bacillati</taxon>
        <taxon>Bacillota</taxon>
        <taxon>Bacilli</taxon>
        <taxon>Bacillales</taxon>
        <taxon>Bacillaceae</taxon>
        <taxon>Bacillus</taxon>
        <taxon>Bacillus cereus group</taxon>
    </lineage>
</organism>
<sequence>MRKPIIAGNWKMNKTLAEAVSFVEEVKGQIPAASAVDAVVCSPALFLERLVAKAEGTDLQVGAQNMHFEKNGAFTGEISPVALSDLKVGYVVLGHSERREMFAETDESVNKKTLAAFEHGLTPIVCCGETLEERESGKTFDLVAGQVTKALAGLTEEQVKVTVIAYEPIWAIGTGKSSSSADANEVCAHIRKVVAEAVSPEAAEAVRIQYGGSVKPENIKEYMAQSDIDGALVGGASLEPASFLGLLGAVK</sequence>
<accession>A9VQ50</accession>
<gene>
    <name evidence="1" type="primary">tpiA</name>
    <name type="ordered locus">BcerKBAB4_4929</name>
</gene>
<name>TPIS_BACMK</name>
<keyword id="KW-0963">Cytoplasm</keyword>
<keyword id="KW-0312">Gluconeogenesis</keyword>
<keyword id="KW-0324">Glycolysis</keyword>
<keyword id="KW-0413">Isomerase</keyword>
<keyword id="KW-0597">Phosphoprotein</keyword>
<reference key="1">
    <citation type="journal article" date="2008" name="Chem. Biol. Interact.">
        <title>Extending the Bacillus cereus group genomics to putative food-borne pathogens of different toxicity.</title>
        <authorList>
            <person name="Lapidus A."/>
            <person name="Goltsman E."/>
            <person name="Auger S."/>
            <person name="Galleron N."/>
            <person name="Segurens B."/>
            <person name="Dossat C."/>
            <person name="Land M.L."/>
            <person name="Broussolle V."/>
            <person name="Brillard J."/>
            <person name="Guinebretiere M.-H."/>
            <person name="Sanchis V."/>
            <person name="Nguen-the C."/>
            <person name="Lereclus D."/>
            <person name="Richardson P."/>
            <person name="Wincker P."/>
            <person name="Weissenbach J."/>
            <person name="Ehrlich S.D."/>
            <person name="Sorokin A."/>
        </authorList>
    </citation>
    <scope>NUCLEOTIDE SEQUENCE [LARGE SCALE GENOMIC DNA]</scope>
    <source>
        <strain>KBAB4</strain>
    </source>
</reference>
<feature type="chain" id="PRO_1000096476" description="Triosephosphate isomerase">
    <location>
        <begin position="1"/>
        <end position="251"/>
    </location>
</feature>
<feature type="active site" description="Electrophile" evidence="1">
    <location>
        <position position="95"/>
    </location>
</feature>
<feature type="active site" description="Proton acceptor" evidence="1">
    <location>
        <position position="167"/>
    </location>
</feature>
<feature type="binding site" evidence="1">
    <location>
        <begin position="9"/>
        <end position="11"/>
    </location>
    <ligand>
        <name>substrate</name>
    </ligand>
</feature>
<feature type="binding site" evidence="1">
    <location>
        <position position="173"/>
    </location>
    <ligand>
        <name>substrate</name>
    </ligand>
</feature>
<feature type="binding site" evidence="1">
    <location>
        <position position="213"/>
    </location>
    <ligand>
        <name>substrate</name>
    </ligand>
</feature>
<feature type="binding site" evidence="1">
    <location>
        <begin position="234"/>
        <end position="235"/>
    </location>
    <ligand>
        <name>substrate</name>
    </ligand>
</feature>
<feature type="modified residue" description="Phosphoserine" evidence="1">
    <location>
        <position position="213"/>
    </location>
</feature>